<protein>
    <recommendedName>
        <fullName>Diacylglycerol kinase beta</fullName>
        <shortName>DAG kinase beta</shortName>
        <ecNumber evidence="7 8">2.7.1.107</ecNumber>
    </recommendedName>
    <alternativeName>
        <fullName>90 kDa diacylglycerol kinase</fullName>
    </alternativeName>
    <alternativeName>
        <fullName>Diglyceride kinase beta</fullName>
        <shortName>DGK-beta</shortName>
    </alternativeName>
</protein>
<name>DGKB_RAT</name>
<comment type="function">
    <text evidence="1 7 8 9">Diacylglycerol kinase that converts diacylglycerol/DAG into phosphatidic acid/phosphatidate/PA and regulates the respective levels of these two bioactive lipids (PubMed:23949095, PubMed:7689223). Thereby, acts as a central switch between the signaling pathways activated by these second messengers with different cellular targets and opposite effects in numerous biological processes (Probable). Has a higher activity with long-chain diacylglycerols like 1,2-di-(9Z-octadecenoyl)-sn-glycerol compared to 1,2-didecanoyl-sn-glycerol (PubMed:7689223). Specifically expressed in brain, it regulates neuron-specific morphological changes including neurite branching and neurite spine formation (By similarity).</text>
</comment>
<comment type="catalytic activity">
    <reaction evidence="7 8">
        <text>a 1,2-diacyl-sn-glycerol + ATP = a 1,2-diacyl-sn-glycero-3-phosphate + ADP + H(+)</text>
        <dbReference type="Rhea" id="RHEA:10272"/>
        <dbReference type="ChEBI" id="CHEBI:15378"/>
        <dbReference type="ChEBI" id="CHEBI:17815"/>
        <dbReference type="ChEBI" id="CHEBI:30616"/>
        <dbReference type="ChEBI" id="CHEBI:58608"/>
        <dbReference type="ChEBI" id="CHEBI:456216"/>
        <dbReference type="EC" id="2.7.1.107"/>
    </reaction>
    <physiologicalReaction direction="left-to-right" evidence="10">
        <dbReference type="Rhea" id="RHEA:10273"/>
    </physiologicalReaction>
</comment>
<comment type="catalytic activity">
    <reaction evidence="8">
        <text>1-octadecanoyl-2-(9Z,12Z)-octadecadienoyl-sn-glycerol + ATP = 1-octadecanoyl-2-(9Z,12Z-octadecadienoyl)-sn-glycero-3-phosphate + ADP + H(+)</text>
        <dbReference type="Rhea" id="RHEA:40339"/>
        <dbReference type="ChEBI" id="CHEBI:15378"/>
        <dbReference type="ChEBI" id="CHEBI:30616"/>
        <dbReference type="ChEBI" id="CHEBI:77097"/>
        <dbReference type="ChEBI" id="CHEBI:77098"/>
        <dbReference type="ChEBI" id="CHEBI:456216"/>
    </reaction>
    <physiologicalReaction direction="left-to-right" evidence="10">
        <dbReference type="Rhea" id="RHEA:40340"/>
    </physiologicalReaction>
</comment>
<comment type="catalytic activity">
    <reaction evidence="8">
        <text>1-octadecanoyl-2-(5Z,8Z,11Z,14Z-eicosatetraenoyl)-sn-glycerol + ATP = 1-octadecanoyl-2-(5Z,8Z,11Z,14Z-eicosatetraenoyl)-sn-glycero-3-phosphate + ADP + H(+)</text>
        <dbReference type="Rhea" id="RHEA:40323"/>
        <dbReference type="ChEBI" id="CHEBI:15378"/>
        <dbReference type="ChEBI" id="CHEBI:30616"/>
        <dbReference type="ChEBI" id="CHEBI:75728"/>
        <dbReference type="ChEBI" id="CHEBI:77091"/>
        <dbReference type="ChEBI" id="CHEBI:456216"/>
    </reaction>
    <physiologicalReaction direction="left-to-right" evidence="10">
        <dbReference type="Rhea" id="RHEA:40324"/>
    </physiologicalReaction>
</comment>
<comment type="catalytic activity">
    <reaction evidence="7 8">
        <text>1,2-di-(9Z-octadecenoyl)-sn-glycerol + ATP = 1,2-di-(9Z-octadecenoyl)-sn-glycero-3-phosphate + ADP + H(+)</text>
        <dbReference type="Rhea" id="RHEA:40327"/>
        <dbReference type="ChEBI" id="CHEBI:15378"/>
        <dbReference type="ChEBI" id="CHEBI:30616"/>
        <dbReference type="ChEBI" id="CHEBI:52333"/>
        <dbReference type="ChEBI" id="CHEBI:74546"/>
        <dbReference type="ChEBI" id="CHEBI:456216"/>
    </reaction>
    <physiologicalReaction direction="left-to-right" evidence="10">
        <dbReference type="Rhea" id="RHEA:40328"/>
    </physiologicalReaction>
</comment>
<comment type="catalytic activity">
    <reaction evidence="8">
        <text>1,2-didecanoyl-sn-glycerol + ATP = 1,2-didecanoyl-sn-glycero-3-phosphate + ADP + H(+)</text>
        <dbReference type="Rhea" id="RHEA:43428"/>
        <dbReference type="ChEBI" id="CHEBI:15378"/>
        <dbReference type="ChEBI" id="CHEBI:18155"/>
        <dbReference type="ChEBI" id="CHEBI:30616"/>
        <dbReference type="ChEBI" id="CHEBI:78227"/>
        <dbReference type="ChEBI" id="CHEBI:456216"/>
    </reaction>
    <physiologicalReaction direction="left-to-right" evidence="10">
        <dbReference type="Rhea" id="RHEA:43429"/>
    </physiologicalReaction>
</comment>
<comment type="activity regulation">
    <text evidence="8">Activated by calcium.</text>
</comment>
<comment type="biophysicochemical properties">
    <kinetics>
        <Vmax evidence="8">16.4 nmol/min/mg enzyme with 1-octadecanoyl-2-(5Z,8Z,11Z,14Z-eicosatetraenoyl)-sn-glycerol as substrate (in presence of 0.02 mM calcium)</Vmax>
    </kinetics>
</comment>
<comment type="pathway">
    <text evidence="10">Lipid metabolism; glycerolipid metabolism.</text>
</comment>
<comment type="subcellular location">
    <subcellularLocation>
        <location evidence="10">Postsynaptic cell membrane</location>
        <topology evidence="10">Peripheral membrane protein</topology>
    </subcellularLocation>
    <subcellularLocation>
        <location evidence="10">Cell membrane</location>
        <topology evidence="10">Peripheral membrane protein</topology>
    </subcellularLocation>
    <subcellularLocation>
        <location evidence="10">Cytoplasm</location>
    </subcellularLocation>
    <text evidence="2">Translocation to the plasma membrane is induced by phorbol esters.</text>
</comment>
<comment type="tissue specificity">
    <text evidence="8">Highly expressed in brain where it is restricted to neuronal populations such as the caudate-putamen, the accumbens nucleus, and the olfactory tubercle (PubMed:7689223). Less abundantly expressed in adrenal gland, small intestine and heart (PubMed:7689223).</text>
</comment>
<comment type="similarity">
    <text evidence="9">Belongs to the eukaryotic diacylglycerol kinase family.</text>
</comment>
<dbReference type="EC" id="2.7.1.107" evidence="7 8"/>
<dbReference type="EMBL" id="D16100">
    <property type="protein sequence ID" value="BAA03675.1"/>
    <property type="molecule type" value="mRNA"/>
</dbReference>
<dbReference type="PIR" id="A47744">
    <property type="entry name" value="A47744"/>
</dbReference>
<dbReference type="RefSeq" id="NP_062177.1">
    <property type="nucleotide sequence ID" value="NM_019304.1"/>
</dbReference>
<dbReference type="SMR" id="P49621"/>
<dbReference type="BioGRID" id="248471">
    <property type="interactions" value="2"/>
</dbReference>
<dbReference type="FunCoup" id="P49621">
    <property type="interactions" value="1027"/>
</dbReference>
<dbReference type="STRING" id="10116.ENSRNOP00000058842"/>
<dbReference type="SwissLipids" id="SLP:000000927"/>
<dbReference type="iPTMnet" id="P49621"/>
<dbReference type="PhosphoSitePlus" id="P49621"/>
<dbReference type="PaxDb" id="10116-ENSRNOP00000058842"/>
<dbReference type="GeneID" id="54248"/>
<dbReference type="KEGG" id="rno:54248"/>
<dbReference type="UCSC" id="RGD:2488">
    <property type="organism name" value="rat"/>
</dbReference>
<dbReference type="AGR" id="RGD:2488"/>
<dbReference type="CTD" id="1607"/>
<dbReference type="RGD" id="2488">
    <property type="gene designation" value="Dgkb"/>
</dbReference>
<dbReference type="eggNOG" id="KOG1169">
    <property type="taxonomic scope" value="Eukaryota"/>
</dbReference>
<dbReference type="InParanoid" id="P49621"/>
<dbReference type="PhylomeDB" id="P49621"/>
<dbReference type="BRENDA" id="2.7.1.107">
    <property type="organism ID" value="5301"/>
</dbReference>
<dbReference type="Reactome" id="R-RNO-114508">
    <property type="pathway name" value="Effects of PIP2 hydrolysis"/>
</dbReference>
<dbReference type="UniPathway" id="UPA00230"/>
<dbReference type="PRO" id="PR:P49621"/>
<dbReference type="Proteomes" id="UP000002494">
    <property type="component" value="Unplaced"/>
</dbReference>
<dbReference type="GO" id="GO:0005737">
    <property type="term" value="C:cytoplasm"/>
    <property type="evidence" value="ECO:0007669"/>
    <property type="project" value="UniProtKB-SubCell"/>
</dbReference>
<dbReference type="GO" id="GO:0099147">
    <property type="term" value="C:extrinsic component of postsynaptic density membrane"/>
    <property type="evidence" value="ECO:0000314"/>
    <property type="project" value="SynGO"/>
</dbReference>
<dbReference type="GO" id="GO:0098978">
    <property type="term" value="C:glutamatergic synapse"/>
    <property type="evidence" value="ECO:0000314"/>
    <property type="project" value="SynGO"/>
</dbReference>
<dbReference type="GO" id="GO:0005886">
    <property type="term" value="C:plasma membrane"/>
    <property type="evidence" value="ECO:0000266"/>
    <property type="project" value="RGD"/>
</dbReference>
<dbReference type="GO" id="GO:0098685">
    <property type="term" value="C:Schaffer collateral - CA1 synapse"/>
    <property type="evidence" value="ECO:0000266"/>
    <property type="project" value="RGD"/>
</dbReference>
<dbReference type="GO" id="GO:0005524">
    <property type="term" value="F:ATP binding"/>
    <property type="evidence" value="ECO:0007669"/>
    <property type="project" value="UniProtKB-KW"/>
</dbReference>
<dbReference type="GO" id="GO:0004143">
    <property type="term" value="F:ATP-dependent diacylglycerol kinase activity"/>
    <property type="evidence" value="ECO:0000314"/>
    <property type="project" value="UniProtKB"/>
</dbReference>
<dbReference type="GO" id="GO:0005509">
    <property type="term" value="F:calcium ion binding"/>
    <property type="evidence" value="ECO:0007669"/>
    <property type="project" value="InterPro"/>
</dbReference>
<dbReference type="GO" id="GO:0008289">
    <property type="term" value="F:lipid binding"/>
    <property type="evidence" value="ECO:0000266"/>
    <property type="project" value="RGD"/>
</dbReference>
<dbReference type="GO" id="GO:0008270">
    <property type="term" value="F:zinc ion binding"/>
    <property type="evidence" value="ECO:0007669"/>
    <property type="project" value="UniProtKB-KW"/>
</dbReference>
<dbReference type="GO" id="GO:0046339">
    <property type="term" value="P:diacylglycerol metabolic process"/>
    <property type="evidence" value="ECO:0000314"/>
    <property type="project" value="UniProtKB"/>
</dbReference>
<dbReference type="GO" id="GO:0046486">
    <property type="term" value="P:glycerolipid metabolic process"/>
    <property type="evidence" value="ECO:0000266"/>
    <property type="project" value="RGD"/>
</dbReference>
<dbReference type="GO" id="GO:0035556">
    <property type="term" value="P:intracellular signal transduction"/>
    <property type="evidence" value="ECO:0000318"/>
    <property type="project" value="GO_Central"/>
</dbReference>
<dbReference type="GO" id="GO:0046834">
    <property type="term" value="P:lipid phosphorylation"/>
    <property type="evidence" value="ECO:0000314"/>
    <property type="project" value="UniProtKB"/>
</dbReference>
<dbReference type="GO" id="GO:0050804">
    <property type="term" value="P:modulation of chemical synaptic transmission"/>
    <property type="evidence" value="ECO:0000266"/>
    <property type="project" value="RGD"/>
</dbReference>
<dbReference type="GO" id="GO:0006654">
    <property type="term" value="P:phosphatidic acid biosynthetic process"/>
    <property type="evidence" value="ECO:0000314"/>
    <property type="project" value="UniProtKB"/>
</dbReference>
<dbReference type="GO" id="GO:0046473">
    <property type="term" value="P:phosphatidic acid metabolic process"/>
    <property type="evidence" value="ECO:0000314"/>
    <property type="project" value="UniProtKB"/>
</dbReference>
<dbReference type="GO" id="GO:0007200">
    <property type="term" value="P:phospholipase C-activating G protein-coupled receptor signaling pathway"/>
    <property type="evidence" value="ECO:0007669"/>
    <property type="project" value="InterPro"/>
</dbReference>
<dbReference type="GO" id="GO:0099175">
    <property type="term" value="P:regulation of postsynapse organization"/>
    <property type="evidence" value="ECO:0000266"/>
    <property type="project" value="RGD"/>
</dbReference>
<dbReference type="GO" id="GO:0009617">
    <property type="term" value="P:response to bacterium"/>
    <property type="evidence" value="ECO:0000266"/>
    <property type="project" value="RGD"/>
</dbReference>
<dbReference type="CDD" id="cd20845">
    <property type="entry name" value="C1_DGKbeta_rpt1"/>
    <property type="match status" value="1"/>
</dbReference>
<dbReference type="CDD" id="cd20891">
    <property type="entry name" value="C1_DGKbeta_rpt2"/>
    <property type="match status" value="1"/>
</dbReference>
<dbReference type="CDD" id="cd00051">
    <property type="entry name" value="EFh"/>
    <property type="match status" value="1"/>
</dbReference>
<dbReference type="FunFam" id="1.10.238.10:FF:000017">
    <property type="entry name" value="Diacylglycerol kinase"/>
    <property type="match status" value="1"/>
</dbReference>
<dbReference type="FunFam" id="1.10.238.110:FF:000001">
    <property type="entry name" value="Diacylglycerol kinase"/>
    <property type="match status" value="1"/>
</dbReference>
<dbReference type="FunFam" id="1.10.238.110:FF:000003">
    <property type="entry name" value="Diacylglycerol kinase"/>
    <property type="match status" value="1"/>
</dbReference>
<dbReference type="FunFam" id="2.60.200.40:FF:000003">
    <property type="entry name" value="Diacylglycerol kinase"/>
    <property type="match status" value="1"/>
</dbReference>
<dbReference type="FunFam" id="3.30.60.20:FF:000013">
    <property type="entry name" value="Diacylglycerol kinase"/>
    <property type="match status" value="1"/>
</dbReference>
<dbReference type="FunFam" id="3.30.60.20:FF:000016">
    <property type="entry name" value="Diacylglycerol kinase"/>
    <property type="match status" value="1"/>
</dbReference>
<dbReference type="FunFam" id="3.40.50.10330:FF:000003">
    <property type="entry name" value="Diacylglycerol kinase"/>
    <property type="match status" value="1"/>
</dbReference>
<dbReference type="Gene3D" id="2.60.200.40">
    <property type="match status" value="2"/>
</dbReference>
<dbReference type="Gene3D" id="3.30.60.20">
    <property type="match status" value="2"/>
</dbReference>
<dbReference type="Gene3D" id="1.10.238.110">
    <property type="entry name" value="Diacylglycerol kinase alpha"/>
    <property type="match status" value="2"/>
</dbReference>
<dbReference type="Gene3D" id="1.10.238.10">
    <property type="entry name" value="EF-hand"/>
    <property type="match status" value="1"/>
</dbReference>
<dbReference type="Gene3D" id="3.40.50.10330">
    <property type="entry name" value="Probable inorganic polyphosphate/atp-NAD kinase, domain 1"/>
    <property type="match status" value="1"/>
</dbReference>
<dbReference type="InterPro" id="IPR017438">
    <property type="entry name" value="ATP-NAD_kinase_N"/>
</dbReference>
<dbReference type="InterPro" id="IPR046349">
    <property type="entry name" value="C1-like_sf"/>
</dbReference>
<dbReference type="InterPro" id="IPR047471">
    <property type="entry name" value="C1_DGKbeta-like_rpt1"/>
</dbReference>
<dbReference type="InterPro" id="IPR047470">
    <property type="entry name" value="C1_DGKbeta_rpt2"/>
</dbReference>
<dbReference type="InterPro" id="IPR029477">
    <property type="entry name" value="DAG_kinase_typeI_N"/>
</dbReference>
<dbReference type="InterPro" id="IPR037607">
    <property type="entry name" value="DGK"/>
</dbReference>
<dbReference type="InterPro" id="IPR038199">
    <property type="entry name" value="DGK_typeI_N_sf"/>
</dbReference>
<dbReference type="InterPro" id="IPR000756">
    <property type="entry name" value="Diacylglycerol_kin_accessory"/>
</dbReference>
<dbReference type="InterPro" id="IPR001206">
    <property type="entry name" value="Diacylglycerol_kinase_cat_dom"/>
</dbReference>
<dbReference type="InterPro" id="IPR011992">
    <property type="entry name" value="EF-hand-dom_pair"/>
</dbReference>
<dbReference type="InterPro" id="IPR018247">
    <property type="entry name" value="EF_Hand_1_Ca_BS"/>
</dbReference>
<dbReference type="InterPro" id="IPR002048">
    <property type="entry name" value="EF_hand_dom"/>
</dbReference>
<dbReference type="InterPro" id="IPR016064">
    <property type="entry name" value="NAD/diacylglycerol_kinase_sf"/>
</dbReference>
<dbReference type="InterPro" id="IPR002219">
    <property type="entry name" value="PE/DAG-bd"/>
</dbReference>
<dbReference type="PANTHER" id="PTHR11255">
    <property type="entry name" value="DIACYLGLYCEROL KINASE"/>
    <property type="match status" value="1"/>
</dbReference>
<dbReference type="PANTHER" id="PTHR11255:SF32">
    <property type="entry name" value="DIACYLGLYCEROL KINASE BETA"/>
    <property type="match status" value="1"/>
</dbReference>
<dbReference type="Pfam" id="PF00130">
    <property type="entry name" value="C1_1"/>
    <property type="match status" value="2"/>
</dbReference>
<dbReference type="Pfam" id="PF14513">
    <property type="entry name" value="DAG_kinase_N"/>
    <property type="match status" value="1"/>
</dbReference>
<dbReference type="Pfam" id="PF00609">
    <property type="entry name" value="DAGK_acc"/>
    <property type="match status" value="1"/>
</dbReference>
<dbReference type="Pfam" id="PF00781">
    <property type="entry name" value="DAGK_cat"/>
    <property type="match status" value="1"/>
</dbReference>
<dbReference type="Pfam" id="PF13499">
    <property type="entry name" value="EF-hand_7"/>
    <property type="match status" value="1"/>
</dbReference>
<dbReference type="SMART" id="SM00109">
    <property type="entry name" value="C1"/>
    <property type="match status" value="2"/>
</dbReference>
<dbReference type="SMART" id="SM00045">
    <property type="entry name" value="DAGKa"/>
    <property type="match status" value="1"/>
</dbReference>
<dbReference type="SMART" id="SM00046">
    <property type="entry name" value="DAGKc"/>
    <property type="match status" value="1"/>
</dbReference>
<dbReference type="SMART" id="SM00054">
    <property type="entry name" value="EFh"/>
    <property type="match status" value="2"/>
</dbReference>
<dbReference type="SUPFAM" id="SSF57889">
    <property type="entry name" value="Cysteine-rich domain"/>
    <property type="match status" value="2"/>
</dbReference>
<dbReference type="SUPFAM" id="SSF47473">
    <property type="entry name" value="EF-hand"/>
    <property type="match status" value="2"/>
</dbReference>
<dbReference type="SUPFAM" id="SSF111331">
    <property type="entry name" value="NAD kinase/diacylglycerol kinase-like"/>
    <property type="match status" value="1"/>
</dbReference>
<dbReference type="PROSITE" id="PS50146">
    <property type="entry name" value="DAGK"/>
    <property type="match status" value="1"/>
</dbReference>
<dbReference type="PROSITE" id="PS00018">
    <property type="entry name" value="EF_HAND_1"/>
    <property type="match status" value="2"/>
</dbReference>
<dbReference type="PROSITE" id="PS50222">
    <property type="entry name" value="EF_HAND_2"/>
    <property type="match status" value="2"/>
</dbReference>
<dbReference type="PROSITE" id="PS00479">
    <property type="entry name" value="ZF_DAG_PE_1"/>
    <property type="match status" value="2"/>
</dbReference>
<dbReference type="PROSITE" id="PS50081">
    <property type="entry name" value="ZF_DAG_PE_2"/>
    <property type="match status" value="2"/>
</dbReference>
<feature type="chain" id="PRO_0000218458" description="Diacylglycerol kinase beta">
    <location>
        <begin position="1"/>
        <end position="801"/>
    </location>
</feature>
<feature type="domain" description="EF-hand 1" evidence="4">
    <location>
        <begin position="148"/>
        <end position="183"/>
    </location>
</feature>
<feature type="domain" description="EF-hand 2" evidence="4">
    <location>
        <begin position="193"/>
        <end position="228"/>
    </location>
</feature>
<feature type="domain" description="DAGKc" evidence="5">
    <location>
        <begin position="431"/>
        <end position="565"/>
    </location>
</feature>
<feature type="zinc finger region" description="Phorbol-ester/DAG-type 1" evidence="3">
    <location>
        <begin position="243"/>
        <end position="292"/>
    </location>
</feature>
<feature type="zinc finger region" description="Phorbol-ester/DAG-type 2" evidence="3">
    <location>
        <begin position="307"/>
        <end position="356"/>
    </location>
</feature>
<feature type="region of interest" description="Disordered" evidence="6">
    <location>
        <begin position="383"/>
        <end position="415"/>
    </location>
</feature>
<feature type="region of interest" description="Disordered" evidence="6">
    <location>
        <begin position="670"/>
        <end position="695"/>
    </location>
</feature>
<feature type="region of interest" description="Required for association with membranes and function in neurite spine formation" evidence="1">
    <location>
        <begin position="770"/>
        <end position="801"/>
    </location>
</feature>
<feature type="compositionally biased region" description="Basic and acidic residues" evidence="6">
    <location>
        <begin position="386"/>
        <end position="398"/>
    </location>
</feature>
<feature type="compositionally biased region" description="Basic residues" evidence="6">
    <location>
        <begin position="675"/>
        <end position="684"/>
    </location>
</feature>
<feature type="compositionally biased region" description="Basic and acidic residues" evidence="6">
    <location>
        <begin position="685"/>
        <end position="695"/>
    </location>
</feature>
<feature type="binding site" evidence="4">
    <location>
        <position position="161"/>
    </location>
    <ligand>
        <name>Ca(2+)</name>
        <dbReference type="ChEBI" id="CHEBI:29108"/>
        <label>1</label>
    </ligand>
</feature>
<feature type="binding site" evidence="4">
    <location>
        <position position="163"/>
    </location>
    <ligand>
        <name>Ca(2+)</name>
        <dbReference type="ChEBI" id="CHEBI:29108"/>
        <label>1</label>
    </ligand>
</feature>
<feature type="binding site" evidence="4">
    <location>
        <position position="165"/>
    </location>
    <ligand>
        <name>Ca(2+)</name>
        <dbReference type="ChEBI" id="CHEBI:29108"/>
        <label>1</label>
    </ligand>
</feature>
<feature type="binding site" evidence="4">
    <location>
        <position position="172"/>
    </location>
    <ligand>
        <name>Ca(2+)</name>
        <dbReference type="ChEBI" id="CHEBI:29108"/>
        <label>1</label>
    </ligand>
</feature>
<feature type="binding site" evidence="4">
    <location>
        <position position="206"/>
    </location>
    <ligand>
        <name>Ca(2+)</name>
        <dbReference type="ChEBI" id="CHEBI:29108"/>
        <label>2</label>
    </ligand>
</feature>
<feature type="binding site" evidence="4">
    <location>
        <position position="208"/>
    </location>
    <ligand>
        <name>Ca(2+)</name>
        <dbReference type="ChEBI" id="CHEBI:29108"/>
        <label>2</label>
    </ligand>
</feature>
<feature type="binding site" evidence="4">
    <location>
        <position position="210"/>
    </location>
    <ligand>
        <name>Ca(2+)</name>
        <dbReference type="ChEBI" id="CHEBI:29108"/>
        <label>2</label>
    </ligand>
</feature>
<feature type="binding site" evidence="4">
    <location>
        <position position="212"/>
    </location>
    <ligand>
        <name>Ca(2+)</name>
        <dbReference type="ChEBI" id="CHEBI:29108"/>
        <label>2</label>
    </ligand>
</feature>
<feature type="binding site" evidence="4">
    <location>
        <position position="217"/>
    </location>
    <ligand>
        <name>Ca(2+)</name>
        <dbReference type="ChEBI" id="CHEBI:29108"/>
        <label>2</label>
    </ligand>
</feature>
<feature type="modified residue" description="Phosphothreonine" evidence="11">
    <location>
        <position position="117"/>
    </location>
</feature>
<feature type="modified residue" description="Phosphoserine" evidence="11">
    <location>
        <position position="417"/>
    </location>
</feature>
<feature type="modified residue" description="Phosphoserine" evidence="1">
    <location>
        <position position="790"/>
    </location>
</feature>
<keyword id="KW-0067">ATP-binding</keyword>
<keyword id="KW-0106">Calcium</keyword>
<keyword id="KW-1003">Cell membrane</keyword>
<keyword id="KW-0963">Cytoplasm</keyword>
<keyword id="KW-0418">Kinase</keyword>
<keyword id="KW-0443">Lipid metabolism</keyword>
<keyword id="KW-0472">Membrane</keyword>
<keyword id="KW-0479">Metal-binding</keyword>
<keyword id="KW-0547">Nucleotide-binding</keyword>
<keyword id="KW-0597">Phosphoprotein</keyword>
<keyword id="KW-0628">Postsynaptic cell membrane</keyword>
<keyword id="KW-1185">Reference proteome</keyword>
<keyword id="KW-0677">Repeat</keyword>
<keyword id="KW-0770">Synapse</keyword>
<keyword id="KW-0808">Transferase</keyword>
<keyword id="KW-0862">Zinc</keyword>
<keyword id="KW-0863">Zinc-finger</keyword>
<reference key="1">
    <citation type="journal article" date="1993" name="Proc. Natl. Acad. Sci. U.S.A.">
        <title>Molecular cloning and expression of a 90-kDa diacylglycerol kinase that predominantly localizes in neurons.</title>
        <authorList>
            <person name="Goto K."/>
            <person name="Kondo H."/>
        </authorList>
    </citation>
    <scope>NUCLEOTIDE SEQUENCE [MRNA]</scope>
    <scope>FUNCTION</scope>
    <scope>CATALYTIC ACTIVITY</scope>
    <scope>BIOPHYSICOCHEMICAL PROPERTIES</scope>
    <scope>SUBSTRATE SPECIFICITY</scope>
    <scope>PATHWAY</scope>
    <scope>SUBCELLULAR LOCATION</scope>
    <scope>TOPOLOGY</scope>
    <scope>TISSUE SPECIFICITY</scope>
    <source>
        <strain>Wistar</strain>
        <tissue>Brain</tissue>
    </source>
</reference>
<reference key="2">
    <citation type="journal article" date="2012" name="Nat. Commun.">
        <title>Quantitative maps of protein phosphorylation sites across 14 different rat organs and tissues.</title>
        <authorList>
            <person name="Lundby A."/>
            <person name="Secher A."/>
            <person name="Lage K."/>
            <person name="Nordsborg N.B."/>
            <person name="Dmytriyev A."/>
            <person name="Lundby C."/>
            <person name="Olsen J.V."/>
        </authorList>
    </citation>
    <scope>PHOSPHORYLATION [LARGE SCALE ANALYSIS] AT THR-117 AND SER-417</scope>
    <scope>IDENTIFICATION BY MASS SPECTROMETRY [LARGE SCALE ANALYSIS]</scope>
</reference>
<reference key="3">
    <citation type="journal article" date="2013" name="Pharmacology">
        <title>Evaluations of the selectivities of the diacylglycerol kinase inhibitors R59022 and R59949 among diacylglycerol kinase isozymes using a new non-radioactive assay method.</title>
        <authorList>
            <person name="Sato M."/>
            <person name="Liu K."/>
            <person name="Sasaki S."/>
            <person name="Kunii N."/>
            <person name="Sakai H."/>
            <person name="Mizuno H."/>
            <person name="Saga H."/>
            <person name="Sakane F."/>
        </authorList>
    </citation>
    <scope>FUNCTION</scope>
    <scope>CATALYTIC ACTIVITY</scope>
</reference>
<gene>
    <name type="primary">Dgkb</name>
    <name type="synonym">Dagk2</name>
</gene>
<organism>
    <name type="scientific">Rattus norvegicus</name>
    <name type="common">Rat</name>
    <dbReference type="NCBI Taxonomy" id="10116"/>
    <lineage>
        <taxon>Eukaryota</taxon>
        <taxon>Metazoa</taxon>
        <taxon>Chordata</taxon>
        <taxon>Craniata</taxon>
        <taxon>Vertebrata</taxon>
        <taxon>Euteleostomi</taxon>
        <taxon>Mammalia</taxon>
        <taxon>Eutheria</taxon>
        <taxon>Euarchontoglires</taxon>
        <taxon>Glires</taxon>
        <taxon>Rodentia</taxon>
        <taxon>Myomorpha</taxon>
        <taxon>Muroidea</taxon>
        <taxon>Muridae</taxon>
        <taxon>Murinae</taxon>
        <taxon>Rattus</taxon>
    </lineage>
</organism>
<accession>P49621</accession>
<proteinExistence type="evidence at protein level"/>
<sequence length="801" mass="90288">MTNQEKWAHLSPSEFSQLQKYAEYSTKKLKDVLEEFHGNGVLAKYNPEGKQDILNQTIDFEGFKLFMKTFLEAELPDDFTAHLFMSFSNKFPHSSPNVKSKPALLSGGLRMNKGAITPPRSSPANTCFPEVIHLKDIVCYLSLLERGRPEDKLEFMFRLYDTDGNGFLDSSELENIIGQMMHVAEYLEWDVTELNPILHEMMEEIDYDRDGTVSLEEWIQGGMTTIPLLVLLGLENNVKDDGQHVWRLKHFNKPAYCNLCLNMLIGVGKQGLCCSFCKYTVHERCARAPPSCIKTYVKSKKNTDVMHHYWVEGNCPTKCDKCHKTVKCYQGLTGLHCVWCQTTLHNKCASHLKPECDCGPLKDHILPPTTICPVVLTMPTAGTSVPEERQSTAKKEKGSSQQPNKVTDKNKMQRANSVTMDGQGLQITPIPGTHPLLVFVNPKSGGKQGERIYRKFQYLLNPRQVYSLSGNGPMPGLHFFRDVPDFRVLACGGDGTVGWILDCIEKANVVKHPPVAILPLGTGNDLARCLRWGGGYEGENLMKILKDIESSTEIMLDRWKFEVTPNDKDEKGDPVPYSIINNYFSIGVDASIAHRFHIMREKHPEKFNSRMKNKFWYFEFGTSETFSATCKKLHESVEIECDGVQIDLINISLQGIAILNIPSMHGGSNLWGESKKKRSHRRIEKKGSDKRPTLTDAKELKFASQDLSDQLLEVVGLEGAMEMGQIYTGLKSAGRRLAQCSSVVIRTSKSLPMQIDGEPWMQTPCTIKITHKNQAPMLMGPPPKTGLFCSLIKRTRNRSKE</sequence>
<evidence type="ECO:0000250" key="1">
    <source>
        <dbReference type="UniProtKB" id="Q6NS52"/>
    </source>
</evidence>
<evidence type="ECO:0000250" key="2">
    <source>
        <dbReference type="UniProtKB" id="Q9Y6T7"/>
    </source>
</evidence>
<evidence type="ECO:0000255" key="3">
    <source>
        <dbReference type="PROSITE-ProRule" id="PRU00226"/>
    </source>
</evidence>
<evidence type="ECO:0000255" key="4">
    <source>
        <dbReference type="PROSITE-ProRule" id="PRU00448"/>
    </source>
</evidence>
<evidence type="ECO:0000255" key="5">
    <source>
        <dbReference type="PROSITE-ProRule" id="PRU00783"/>
    </source>
</evidence>
<evidence type="ECO:0000256" key="6">
    <source>
        <dbReference type="SAM" id="MobiDB-lite"/>
    </source>
</evidence>
<evidence type="ECO:0000269" key="7">
    <source>
    </source>
</evidence>
<evidence type="ECO:0000269" key="8">
    <source>
    </source>
</evidence>
<evidence type="ECO:0000305" key="9"/>
<evidence type="ECO:0000305" key="10">
    <source>
    </source>
</evidence>
<evidence type="ECO:0007744" key="11">
    <source>
    </source>
</evidence>